<protein>
    <recommendedName>
        <fullName>Serpentine receptor class beta-11</fullName>
        <shortName>Protein srb-11</shortName>
    </recommendedName>
</protein>
<proteinExistence type="inferred from homology"/>
<organism>
    <name type="scientific">Caenorhabditis elegans</name>
    <dbReference type="NCBI Taxonomy" id="6239"/>
    <lineage>
        <taxon>Eukaryota</taxon>
        <taxon>Metazoa</taxon>
        <taxon>Ecdysozoa</taxon>
        <taxon>Nematoda</taxon>
        <taxon>Chromadorea</taxon>
        <taxon>Rhabditida</taxon>
        <taxon>Rhabditina</taxon>
        <taxon>Rhabditomorpha</taxon>
        <taxon>Rhabditoidea</taxon>
        <taxon>Rhabditidae</taxon>
        <taxon>Peloderinae</taxon>
        <taxon>Caenorhabditis</taxon>
    </lineage>
</organism>
<name>SRB11_CAEEL</name>
<accession>P46506</accession>
<feature type="chain" id="PRO_0000104504" description="Serpentine receptor class beta-11">
    <location>
        <begin position="1"/>
        <end position="346"/>
    </location>
</feature>
<feature type="transmembrane region" description="Helical" evidence="1">
    <location>
        <begin position="26"/>
        <end position="46"/>
    </location>
</feature>
<feature type="transmembrane region" description="Helical" evidence="1">
    <location>
        <begin position="57"/>
        <end position="77"/>
    </location>
</feature>
<feature type="transmembrane region" description="Helical" evidence="1">
    <location>
        <begin position="102"/>
        <end position="122"/>
    </location>
</feature>
<feature type="transmembrane region" description="Helical" evidence="1">
    <location>
        <begin position="139"/>
        <end position="159"/>
    </location>
</feature>
<feature type="transmembrane region" description="Helical" evidence="1">
    <location>
        <begin position="186"/>
        <end position="206"/>
    </location>
</feature>
<feature type="transmembrane region" description="Helical" evidence="1">
    <location>
        <begin position="239"/>
        <end position="259"/>
    </location>
</feature>
<feature type="transmembrane region" description="Helical" evidence="1">
    <location>
        <begin position="278"/>
        <end position="298"/>
    </location>
</feature>
<keyword id="KW-0472">Membrane</keyword>
<keyword id="KW-1185">Reference proteome</keyword>
<keyword id="KW-0812">Transmembrane</keyword>
<keyword id="KW-1133">Transmembrane helix</keyword>
<dbReference type="EMBL" id="FO081210">
    <property type="protein sequence ID" value="CCD69930.1"/>
    <property type="molecule type" value="Genomic_DNA"/>
</dbReference>
<dbReference type="PIR" id="B88485">
    <property type="entry name" value="B88485"/>
</dbReference>
<dbReference type="RefSeq" id="NP_498430.2">
    <property type="nucleotide sequence ID" value="NM_066029.2"/>
</dbReference>
<dbReference type="SMR" id="P46506"/>
<dbReference type="FunCoup" id="P46506">
    <property type="interactions" value="3"/>
</dbReference>
<dbReference type="STRING" id="6239.F23F12.10.1"/>
<dbReference type="PaxDb" id="6239-F23F12.10"/>
<dbReference type="EnsemblMetazoa" id="F23F12.10.1">
    <property type="protein sequence ID" value="F23F12.10.1"/>
    <property type="gene ID" value="WBGene00005076"/>
</dbReference>
<dbReference type="GeneID" id="191793"/>
<dbReference type="KEGG" id="cel:CELE_F23F12.10"/>
<dbReference type="UCSC" id="F23F12.10">
    <property type="organism name" value="c. elegans"/>
</dbReference>
<dbReference type="AGR" id="WB:WBGene00005076"/>
<dbReference type="CTD" id="191793"/>
<dbReference type="WormBase" id="F23F12.10">
    <property type="protein sequence ID" value="CE38175"/>
    <property type="gene ID" value="WBGene00005076"/>
    <property type="gene designation" value="srb-11"/>
</dbReference>
<dbReference type="eggNOG" id="ENOG502TGFS">
    <property type="taxonomic scope" value="Eukaryota"/>
</dbReference>
<dbReference type="GeneTree" id="ENSGT00970000195867"/>
<dbReference type="HOGENOM" id="CLU_045882_0_0_1"/>
<dbReference type="InParanoid" id="P46506"/>
<dbReference type="OMA" id="RYFAMET"/>
<dbReference type="OrthoDB" id="5781493at2759"/>
<dbReference type="PhylomeDB" id="P46506"/>
<dbReference type="PRO" id="PR:P46506"/>
<dbReference type="Proteomes" id="UP000001940">
    <property type="component" value="Chromosome III"/>
</dbReference>
<dbReference type="GO" id="GO:0016020">
    <property type="term" value="C:membrane"/>
    <property type="evidence" value="ECO:0007669"/>
    <property type="project" value="UniProtKB-SubCell"/>
</dbReference>
<dbReference type="GO" id="GO:0004888">
    <property type="term" value="F:transmembrane signaling receptor activity"/>
    <property type="evidence" value="ECO:0007669"/>
    <property type="project" value="InterPro"/>
</dbReference>
<dbReference type="GO" id="GO:0007606">
    <property type="term" value="P:sensory perception of chemical stimulus"/>
    <property type="evidence" value="ECO:0007669"/>
    <property type="project" value="InterPro"/>
</dbReference>
<dbReference type="InterPro" id="IPR002184">
    <property type="entry name" value="7TM_GPCR_serpentine_rcpt_Srb"/>
</dbReference>
<dbReference type="PANTHER" id="PTHR31216">
    <property type="entry name" value="SERPENTINE RECEPTOR CLASS BETA-1-RELATED-RELATED"/>
    <property type="match status" value="1"/>
</dbReference>
<dbReference type="PANTHER" id="PTHR31216:SF0">
    <property type="entry name" value="SERPENTINE RECEPTOR CLASS BETA-11"/>
    <property type="match status" value="1"/>
</dbReference>
<dbReference type="Pfam" id="PF02175">
    <property type="entry name" value="7TM_GPCR_Srb"/>
    <property type="match status" value="1"/>
</dbReference>
<dbReference type="PRINTS" id="PR00699">
    <property type="entry name" value="TMPROTEINSRB"/>
</dbReference>
<dbReference type="SUPFAM" id="SSF81321">
    <property type="entry name" value="Family A G protein-coupled receptor-like"/>
    <property type="match status" value="1"/>
</dbReference>
<comment type="subcellular location">
    <subcellularLocation>
        <location evidence="2">Membrane</location>
        <topology evidence="2">Multi-pass membrane protein</topology>
    </subcellularLocation>
</comment>
<comment type="similarity">
    <text evidence="2">Belongs to the nematode receptor-like protein srb family.</text>
</comment>
<gene>
    <name type="primary">srb-11</name>
    <name type="ORF">F23F12.10</name>
</gene>
<reference key="1">
    <citation type="journal article" date="1998" name="Science">
        <title>Genome sequence of the nematode C. elegans: a platform for investigating biology.</title>
        <authorList>
            <consortium name="The C. elegans sequencing consortium"/>
        </authorList>
    </citation>
    <scope>NUCLEOTIDE SEQUENCE [LARGE SCALE GENOMIC DNA]</scope>
    <source>
        <strain>Bristol N2</strain>
    </source>
</reference>
<evidence type="ECO:0000255" key="1"/>
<evidence type="ECO:0000305" key="2"/>
<sequence length="346" mass="39277">MNYSSQACITAFNLAYNLVFQASNYYQMIISFCSVFPLIYFLLFKLSKSSFHGNLKTIFISYFVSLVAFSMTHLTTSTTQIIKSIISTDNCDLIISPFPHKIWNFFILFFLTLSTFFPCSVTIERYFAMETAEKYEKASVVMGPILVGFNVLLNFCIIFNMLKDESYTDGNVSFSVIPAVAAQKAFTFFIIIFFVNLVDVIFDLILLRMNLKLKLQLKNSSLAVKYQLEEVYQSTKFSVFLILIHIISFGIYVSAVVFFRYFGNLIISDPDSLFGVRTFSTTIVPTYNFVIGSFSSFFNRIKLKKSEGATIQMSSTGKSGANNYDQAIFSIWNSVSGPIDRNVTLV</sequence>